<evidence type="ECO:0000255" key="1">
    <source>
        <dbReference type="HAMAP-Rule" id="MF_01270"/>
    </source>
</evidence>
<organism>
    <name type="scientific">Nitrosospira multiformis (strain ATCC 25196 / NCIMB 11849 / C 71)</name>
    <dbReference type="NCBI Taxonomy" id="323848"/>
    <lineage>
        <taxon>Bacteria</taxon>
        <taxon>Pseudomonadati</taxon>
        <taxon>Pseudomonadota</taxon>
        <taxon>Betaproteobacteria</taxon>
        <taxon>Nitrosomonadales</taxon>
        <taxon>Nitrosomonadaceae</taxon>
        <taxon>Nitrosospira</taxon>
    </lineage>
</organism>
<protein>
    <recommendedName>
        <fullName evidence="1">Anhydro-N-acetylmuramic acid kinase</fullName>
        <ecNumber evidence="1">2.7.1.170</ecNumber>
    </recommendedName>
    <alternativeName>
        <fullName evidence="1">AnhMurNAc kinase</fullName>
    </alternativeName>
</protein>
<comment type="function">
    <text evidence="1">Catalyzes the specific phosphorylation of 1,6-anhydro-N-acetylmuramic acid (anhMurNAc) with the simultaneous cleavage of the 1,6-anhydro ring, generating MurNAc-6-P. Is required for the utilization of anhMurNAc either imported from the medium or derived from its own cell wall murein, and thus plays a role in cell wall recycling.</text>
</comment>
<comment type="catalytic activity">
    <reaction evidence="1">
        <text>1,6-anhydro-N-acetyl-beta-muramate + ATP + H2O = N-acetyl-D-muramate 6-phosphate + ADP + H(+)</text>
        <dbReference type="Rhea" id="RHEA:24952"/>
        <dbReference type="ChEBI" id="CHEBI:15377"/>
        <dbReference type="ChEBI" id="CHEBI:15378"/>
        <dbReference type="ChEBI" id="CHEBI:30616"/>
        <dbReference type="ChEBI" id="CHEBI:58690"/>
        <dbReference type="ChEBI" id="CHEBI:58722"/>
        <dbReference type="ChEBI" id="CHEBI:456216"/>
        <dbReference type="EC" id="2.7.1.170"/>
    </reaction>
</comment>
<comment type="pathway">
    <text evidence="1">Amino-sugar metabolism; 1,6-anhydro-N-acetylmuramate degradation.</text>
</comment>
<comment type="pathway">
    <text evidence="1">Cell wall biogenesis; peptidoglycan recycling.</text>
</comment>
<comment type="similarity">
    <text evidence="1">Belongs to the anhydro-N-acetylmuramic acid kinase family.</text>
</comment>
<sequence>MKAAYYIGIMSGTSLDGIDAVLADFEAPRPVLLDNFYLPYPEKLREQLKALHFPAHGELHRAATLGNQLARHYAEAVGGLLRKSGVAPPEVAAIGCHGQTIRHCPQAEAGYTIQLCNSPLLVELTGIRVVSDFRSRDIAAGGQGAPLVPAFHQALFADPHVHRVIVNIGGISNLTDLPRNGSVTGFDCGPGNAMMDEWCARHTGQAYDEEGRWAATGKTLSVLLEKLLALPFFSLPPPKSVSRELFSTTWLEGYLKGDESPADVQATLLELTVAGIARCILGYCGDATEIYVCGGGARNSYLIASLQEALSGRKVGLTDSLGVDADWLEAFAFAWLARQLIQGIPGNIPSVTGAKGPRLLGAIYPA</sequence>
<name>ANMK_NITMU</name>
<feature type="chain" id="PRO_0000250019" description="Anhydro-N-acetylmuramic acid kinase">
    <location>
        <begin position="1"/>
        <end position="366"/>
    </location>
</feature>
<feature type="binding site" evidence="1">
    <location>
        <begin position="12"/>
        <end position="19"/>
    </location>
    <ligand>
        <name>ATP</name>
        <dbReference type="ChEBI" id="CHEBI:30616"/>
    </ligand>
</feature>
<gene>
    <name evidence="1" type="primary">anmK</name>
    <name type="ordered locus">Nmul_A0555</name>
</gene>
<accession>Q2YBK8</accession>
<keyword id="KW-0067">ATP-binding</keyword>
<keyword id="KW-0119">Carbohydrate metabolism</keyword>
<keyword id="KW-0418">Kinase</keyword>
<keyword id="KW-0547">Nucleotide-binding</keyword>
<keyword id="KW-1185">Reference proteome</keyword>
<keyword id="KW-0808">Transferase</keyword>
<proteinExistence type="inferred from homology"/>
<dbReference type="EC" id="2.7.1.170" evidence="1"/>
<dbReference type="EMBL" id="CP000103">
    <property type="protein sequence ID" value="ABB73863.1"/>
    <property type="molecule type" value="Genomic_DNA"/>
</dbReference>
<dbReference type="RefSeq" id="WP_011379917.1">
    <property type="nucleotide sequence ID" value="NC_007614.1"/>
</dbReference>
<dbReference type="SMR" id="Q2YBK8"/>
<dbReference type="STRING" id="323848.Nmul_A0555"/>
<dbReference type="KEGG" id="nmu:Nmul_A0555"/>
<dbReference type="eggNOG" id="COG2377">
    <property type="taxonomic scope" value="Bacteria"/>
</dbReference>
<dbReference type="HOGENOM" id="CLU_038782_0_0_4"/>
<dbReference type="OrthoDB" id="9763949at2"/>
<dbReference type="UniPathway" id="UPA00343"/>
<dbReference type="UniPathway" id="UPA00544"/>
<dbReference type="Proteomes" id="UP000002718">
    <property type="component" value="Chromosome"/>
</dbReference>
<dbReference type="GO" id="GO:0005524">
    <property type="term" value="F:ATP binding"/>
    <property type="evidence" value="ECO:0007669"/>
    <property type="project" value="UniProtKB-UniRule"/>
</dbReference>
<dbReference type="GO" id="GO:0016301">
    <property type="term" value="F:kinase activity"/>
    <property type="evidence" value="ECO:0007669"/>
    <property type="project" value="UniProtKB-KW"/>
</dbReference>
<dbReference type="GO" id="GO:0016773">
    <property type="term" value="F:phosphotransferase activity, alcohol group as acceptor"/>
    <property type="evidence" value="ECO:0007669"/>
    <property type="project" value="UniProtKB-UniRule"/>
</dbReference>
<dbReference type="GO" id="GO:0097175">
    <property type="term" value="P:1,6-anhydro-N-acetyl-beta-muramic acid catabolic process"/>
    <property type="evidence" value="ECO:0007669"/>
    <property type="project" value="UniProtKB-UniRule"/>
</dbReference>
<dbReference type="GO" id="GO:0006040">
    <property type="term" value="P:amino sugar metabolic process"/>
    <property type="evidence" value="ECO:0007669"/>
    <property type="project" value="InterPro"/>
</dbReference>
<dbReference type="GO" id="GO:0009254">
    <property type="term" value="P:peptidoglycan turnover"/>
    <property type="evidence" value="ECO:0007669"/>
    <property type="project" value="UniProtKB-UniRule"/>
</dbReference>
<dbReference type="CDD" id="cd24050">
    <property type="entry name" value="ASKHA_NBD_ANMK"/>
    <property type="match status" value="1"/>
</dbReference>
<dbReference type="Gene3D" id="3.30.420.40">
    <property type="match status" value="2"/>
</dbReference>
<dbReference type="HAMAP" id="MF_01270">
    <property type="entry name" value="AnhMurNAc_kinase"/>
    <property type="match status" value="1"/>
</dbReference>
<dbReference type="InterPro" id="IPR005338">
    <property type="entry name" value="Anhydro_N_Ac-Mur_kinase"/>
</dbReference>
<dbReference type="InterPro" id="IPR043129">
    <property type="entry name" value="ATPase_NBD"/>
</dbReference>
<dbReference type="NCBIfam" id="NF007139">
    <property type="entry name" value="PRK09585.1-3"/>
    <property type="match status" value="1"/>
</dbReference>
<dbReference type="PANTHER" id="PTHR30605">
    <property type="entry name" value="ANHYDRO-N-ACETYLMURAMIC ACID KINASE"/>
    <property type="match status" value="1"/>
</dbReference>
<dbReference type="PANTHER" id="PTHR30605:SF0">
    <property type="entry name" value="ANHYDRO-N-ACETYLMURAMIC ACID KINASE"/>
    <property type="match status" value="1"/>
</dbReference>
<dbReference type="Pfam" id="PF03702">
    <property type="entry name" value="AnmK"/>
    <property type="match status" value="1"/>
</dbReference>
<dbReference type="SUPFAM" id="SSF53067">
    <property type="entry name" value="Actin-like ATPase domain"/>
    <property type="match status" value="1"/>
</dbReference>
<reference key="1">
    <citation type="submission" date="2005-08" db="EMBL/GenBank/DDBJ databases">
        <title>Complete sequence of chromosome 1 of Nitrosospira multiformis ATCC 25196.</title>
        <authorList>
            <person name="Copeland A."/>
            <person name="Lucas S."/>
            <person name="Lapidus A."/>
            <person name="Barry K."/>
            <person name="Detter J.C."/>
            <person name="Glavina T."/>
            <person name="Hammon N."/>
            <person name="Israni S."/>
            <person name="Pitluck S."/>
            <person name="Chain P."/>
            <person name="Malfatti S."/>
            <person name="Shin M."/>
            <person name="Vergez L."/>
            <person name="Schmutz J."/>
            <person name="Larimer F."/>
            <person name="Land M."/>
            <person name="Hauser L."/>
            <person name="Kyrpides N."/>
            <person name="Lykidis A."/>
            <person name="Richardson P."/>
        </authorList>
    </citation>
    <scope>NUCLEOTIDE SEQUENCE [LARGE SCALE GENOMIC DNA]</scope>
    <source>
        <strain>ATCC 25196 / NCIMB 11849 / C 71</strain>
    </source>
</reference>